<accession>P0CE52</accession>
<accession>O07987</accession>
<accession>O07988</accession>
<accession>P03837</accession>
<accession>P76355</accession>
<accession>Q2MBK1</accession>
<accession>Q2MBM8</accession>
<feature type="chain" id="PRO_0000392483" description="Transposase InsH for insertion sequence element IS5F">
    <location>
        <begin position="1"/>
        <end position="326"/>
    </location>
</feature>
<organism>
    <name type="scientific">Escherichia coli (strain K12)</name>
    <dbReference type="NCBI Taxonomy" id="83333"/>
    <lineage>
        <taxon>Bacteria</taxon>
        <taxon>Pseudomonadati</taxon>
        <taxon>Pseudomonadota</taxon>
        <taxon>Gammaproteobacteria</taxon>
        <taxon>Enterobacterales</taxon>
        <taxon>Enterobacteriaceae</taxon>
        <taxon>Escherichia</taxon>
    </lineage>
</organism>
<name>INSH4_ECOLI</name>
<evidence type="ECO:0000305" key="1"/>
<gene>
    <name type="primary">insH4</name>
    <name type="ordered locus">b1331</name>
    <name type="ordered locus">JW1324</name>
</gene>
<comment type="function">
    <text>Involved in the transposition of the insertion sequence IS5.</text>
</comment>
<comment type="similarity">
    <text evidence="1">Belongs to the transposase 11 family.</text>
</comment>
<comment type="sequence caution" evidence="1">
    <conflict type="erroneous initiation">
        <sequence resource="EMBL-CDS" id="BAA14924"/>
    </conflict>
    <text>Extended N-terminus.</text>
</comment>
<reference key="1">
    <citation type="journal article" date="1994" name="Nucleic Acids Res.">
        <title>Analysis of the Escherichia coli genome. V. DNA sequence of the region from 76.0 to 81.5 minutes.</title>
        <authorList>
            <person name="Sofia H.J."/>
            <person name="Burland V."/>
            <person name="Daniels D.L."/>
            <person name="Plunkett G. III"/>
            <person name="Blattner F.R."/>
        </authorList>
    </citation>
    <scope>NUCLEOTIDE SEQUENCE [LARGE SCALE GENOMIC DNA]</scope>
    <source>
        <strain>K12 / MG1655 / ATCC 47076</strain>
    </source>
</reference>
<reference key="2">
    <citation type="journal article" date="1996" name="DNA Res.">
        <title>A 570-kb DNA sequence of the Escherichia coli K-12 genome corresponding to the 28.0-40.1 min region on the linkage map.</title>
        <authorList>
            <person name="Aiba H."/>
            <person name="Baba T."/>
            <person name="Fujita K."/>
            <person name="Hayashi K."/>
            <person name="Inada T."/>
            <person name="Isono K."/>
            <person name="Itoh T."/>
            <person name="Kasai H."/>
            <person name="Kashimoto K."/>
            <person name="Kimura S."/>
            <person name="Kitakawa M."/>
            <person name="Kitagawa M."/>
            <person name="Makino K."/>
            <person name="Miki T."/>
            <person name="Mizobuchi K."/>
            <person name="Mori H."/>
            <person name="Mori T."/>
            <person name="Motomura K."/>
            <person name="Nakade S."/>
            <person name="Nakamura Y."/>
            <person name="Nashimoto H."/>
            <person name="Nishio Y."/>
            <person name="Oshima T."/>
            <person name="Saito N."/>
            <person name="Sampei G."/>
            <person name="Seki Y."/>
            <person name="Sivasundaram S."/>
            <person name="Tagami H."/>
            <person name="Takeda J."/>
            <person name="Takemoto K."/>
            <person name="Takeuchi Y."/>
            <person name="Wada C."/>
            <person name="Yamamoto Y."/>
            <person name="Horiuchi T."/>
        </authorList>
    </citation>
    <scope>NUCLEOTIDE SEQUENCE [LARGE SCALE GENOMIC DNA]</scope>
    <source>
        <strain>K12 / W3110 / ATCC 27325 / DSM 5911</strain>
    </source>
</reference>
<reference key="3">
    <citation type="journal article" date="1996" name="DNA Res.">
        <title>A 460-kb DNA sequence of the Escherichia coli K-12 genome corresponding to the 40.1-50.0 min region on the linkage map.</title>
        <authorList>
            <person name="Itoh T."/>
            <person name="Aiba H."/>
            <person name="Baba T."/>
            <person name="Fujita K."/>
            <person name="Hayashi K."/>
            <person name="Inada T."/>
            <person name="Isono K."/>
            <person name="Kasai H."/>
            <person name="Kimura S."/>
            <person name="Kitakawa M."/>
            <person name="Kitagawa M."/>
            <person name="Makino K."/>
            <person name="Miki T."/>
            <person name="Mizobuchi K."/>
            <person name="Mori H."/>
            <person name="Mori T."/>
            <person name="Motomura K."/>
            <person name="Nakade S."/>
            <person name="Nakamura Y."/>
            <person name="Nashimoto H."/>
            <person name="Nishio Y."/>
            <person name="Oshima T."/>
            <person name="Saito N."/>
            <person name="Sampei G."/>
            <person name="Seki Y."/>
            <person name="Sivasundaram S."/>
            <person name="Tagami H."/>
            <person name="Takeda J."/>
            <person name="Takemoto K."/>
            <person name="Wada C."/>
            <person name="Yamamoto Y."/>
            <person name="Horiuchi T."/>
        </authorList>
    </citation>
    <scope>NUCLEOTIDE SEQUENCE [LARGE SCALE GENOMIC DNA]</scope>
    <source>
        <strain>K12 / W3110 / ATCC 27325 / DSM 5911</strain>
    </source>
</reference>
<reference key="4">
    <citation type="submission" date="1997-01" db="EMBL/GenBank/DDBJ databases">
        <title>Sequence of minutes 4-25 of Escherichia coli.</title>
        <authorList>
            <person name="Chung E."/>
            <person name="Allen E."/>
            <person name="Araujo R."/>
            <person name="Aparicio A.M."/>
            <person name="Davis K."/>
            <person name="Duncan M."/>
            <person name="Federspiel N."/>
            <person name="Hyman R."/>
            <person name="Kalman S."/>
            <person name="Komp C."/>
            <person name="Kurdi O."/>
            <person name="Lew H."/>
            <person name="Lin D."/>
            <person name="Namath A."/>
            <person name="Oefner P."/>
            <person name="Roberts D."/>
            <person name="Schramm S."/>
            <person name="Davis R.W."/>
        </authorList>
    </citation>
    <scope>NUCLEOTIDE SEQUENCE [LARGE SCALE GENOMIC DNA]</scope>
    <source>
        <strain>K12 / MG1655 / ATCC 47076</strain>
    </source>
</reference>
<reference key="5">
    <citation type="journal article" date="1997" name="Science">
        <title>The complete genome sequence of Escherichia coli K-12.</title>
        <authorList>
            <person name="Blattner F.R."/>
            <person name="Plunkett G. III"/>
            <person name="Bloch C.A."/>
            <person name="Perna N.T."/>
            <person name="Burland V."/>
            <person name="Riley M."/>
            <person name="Collado-Vides J."/>
            <person name="Glasner J.D."/>
            <person name="Rode C.K."/>
            <person name="Mayhew G.F."/>
            <person name="Gregor J."/>
            <person name="Davis N.W."/>
            <person name="Kirkpatrick H.A."/>
            <person name="Goeden M.A."/>
            <person name="Rose D.J."/>
            <person name="Mau B."/>
            <person name="Shao Y."/>
        </authorList>
    </citation>
    <scope>NUCLEOTIDE SEQUENCE [LARGE SCALE GENOMIC DNA]</scope>
    <source>
        <strain>K12 / MG1655 / ATCC 47076</strain>
    </source>
</reference>
<reference key="6">
    <citation type="journal article" date="2006" name="Mol. Syst. Biol.">
        <title>Highly accurate genome sequences of Escherichia coli K-12 strains MG1655 and W3110.</title>
        <authorList>
            <person name="Hayashi K."/>
            <person name="Morooka N."/>
            <person name="Yamamoto Y."/>
            <person name="Fujita K."/>
            <person name="Isono K."/>
            <person name="Choi S."/>
            <person name="Ohtsubo E."/>
            <person name="Baba T."/>
            <person name="Wanner B.L."/>
            <person name="Mori H."/>
            <person name="Horiuchi T."/>
        </authorList>
    </citation>
    <scope>NUCLEOTIDE SEQUENCE [LARGE SCALE GENOMIC DNA]</scope>
    <source>
        <strain>K12 / W3110 / ATCC 27325 / DSM 5911</strain>
    </source>
</reference>
<sequence>MSHQLTFADSEFSSKRRQTRKEIFLSRMEQILPWQNMVEVIEPFYPKAGNGRRPYPLETMLRIHCMQHWYNLSDGAMEDALYEIASMRLFARLSLDSALPDRTTIMNFRHLLEQHQLARQLFKTINRWLAEAGVMMTQGTLVDATIIEAPSSTKNKEQQRDPEMHQTKKGNQWHFGMKAHIGVDAKSGLTHSLVTTAANEHDLNQLGNLLHGEEQFVSADAGYQGAPQREELAEVDVDWLIAERPGKVRTLKQHPRKNKTAINIEYMKASIRARVEHPFRIIKRQFGFVKARYKGLLKNDNQLAMLFTLANLFRADQMIRQWERSH</sequence>
<proteinExistence type="inferred from homology"/>
<dbReference type="EMBL" id="U00096">
    <property type="protein sequence ID" value="AAC74413.2"/>
    <property type="molecule type" value="Genomic_DNA"/>
</dbReference>
<dbReference type="EMBL" id="AP009048">
    <property type="protein sequence ID" value="BAA14924.1"/>
    <property type="status" value="ALT_INIT"/>
    <property type="molecule type" value="Genomic_DNA"/>
</dbReference>
<dbReference type="RefSeq" id="NP_414793.1">
    <property type="nucleotide sequence ID" value="NC_000913.3"/>
</dbReference>
<dbReference type="RefSeq" id="NP_415084.1">
    <property type="nucleotide sequence ID" value="NC_000913.3"/>
</dbReference>
<dbReference type="RefSeq" id="NP_415189.1">
    <property type="nucleotide sequence ID" value="NC_000913.3"/>
</dbReference>
<dbReference type="RefSeq" id="NP_415847.1">
    <property type="nucleotide sequence ID" value="NC_000913.3"/>
</dbReference>
<dbReference type="RefSeq" id="NP_416535.1">
    <property type="nucleotide sequence ID" value="NC_000913.3"/>
</dbReference>
<dbReference type="RefSeq" id="NP_416696.1">
    <property type="nucleotide sequence ID" value="NC_000913.3"/>
</dbReference>
<dbReference type="RefSeq" id="NP_417456.1">
    <property type="nucleotide sequence ID" value="NC_000913.3"/>
</dbReference>
<dbReference type="RefSeq" id="NP_417685.1">
    <property type="nucleotide sequence ID" value="NC_000913.3"/>
</dbReference>
<dbReference type="RefSeq" id="NP_417962.1">
    <property type="nucleotide sequence ID" value="NC_000913.3"/>
</dbReference>
<dbReference type="RefSeq" id="WP_000019403.1">
    <property type="nucleotide sequence ID" value="NZ_SSZK01000120.1"/>
</dbReference>
<dbReference type="FunCoup" id="P0CE52">
    <property type="interactions" value="11"/>
</dbReference>
<dbReference type="jPOST" id="P0CE52"/>
<dbReference type="EnsemblBacteria" id="AAC74413">
    <property type="protein sequence ID" value="AAC74413"/>
    <property type="gene ID" value="b1331"/>
</dbReference>
<dbReference type="KEGG" id="ecj:JW1324"/>
<dbReference type="KEGG" id="eco:b0259"/>
<dbReference type="KEGG" id="eco:b0552"/>
<dbReference type="KEGG" id="eco:b0656"/>
<dbReference type="KEGG" id="eco:b2030"/>
<dbReference type="KEGG" id="eco:b2192"/>
<dbReference type="KEGG" id="eco:b2982"/>
<dbReference type="KEGG" id="eco:b3218"/>
<dbReference type="KEGG" id="eco:b3505"/>
<dbReference type="KEGG" id="eco:b4711"/>
<dbReference type="KEGG" id="ecoc:C3026_01250"/>
<dbReference type="KEGG" id="ecoc:C3026_02730"/>
<dbReference type="KEGG" id="ecoc:C3026_03280"/>
<dbReference type="KEGG" id="ecoc:C3026_07795"/>
<dbReference type="KEGG" id="ecoc:C3026_10760"/>
<dbReference type="KEGG" id="ecoc:C3026_11440"/>
<dbReference type="KEGG" id="ecoc:C3026_12250"/>
<dbReference type="KEGG" id="ecoc:C3026_16315"/>
<dbReference type="KEGG" id="ecoc:C3026_17505"/>
<dbReference type="KEGG" id="ecoc:C3026_18985"/>
<dbReference type="KEGG" id="ecoc:C3026_23975"/>
<dbReference type="EchoBASE" id="EB4722"/>
<dbReference type="HOGENOM" id="CLU_049873_1_2_6"/>
<dbReference type="InParanoid" id="P0CE52"/>
<dbReference type="PhylomeDB" id="P0CE52"/>
<dbReference type="BioCyc" id="EcoCyc:MONOMER0-4236"/>
<dbReference type="PRO" id="PR:P0CE52"/>
<dbReference type="Proteomes" id="UP000000625">
    <property type="component" value="Chromosome"/>
</dbReference>
<dbReference type="GO" id="GO:0005829">
    <property type="term" value="C:cytosol"/>
    <property type="evidence" value="ECO:0000318"/>
    <property type="project" value="GO_Central"/>
</dbReference>
<dbReference type="GO" id="GO:0003677">
    <property type="term" value="F:DNA binding"/>
    <property type="evidence" value="ECO:0007669"/>
    <property type="project" value="UniProtKB-KW"/>
</dbReference>
<dbReference type="GO" id="GO:0004803">
    <property type="term" value="F:transposase activity"/>
    <property type="evidence" value="ECO:0000318"/>
    <property type="project" value="GO_Central"/>
</dbReference>
<dbReference type="GO" id="GO:0006313">
    <property type="term" value="P:DNA transposition"/>
    <property type="evidence" value="ECO:0000318"/>
    <property type="project" value="GO_Central"/>
</dbReference>
<dbReference type="InterPro" id="IPR047959">
    <property type="entry name" value="Transpos_IS5"/>
</dbReference>
<dbReference type="InterPro" id="IPR002559">
    <property type="entry name" value="Transposase_11"/>
</dbReference>
<dbReference type="InterPro" id="IPR008490">
    <property type="entry name" value="Transposase_InsH_N"/>
</dbReference>
<dbReference type="NCBIfam" id="NF033581">
    <property type="entry name" value="transpos_IS5_4"/>
    <property type="match status" value="1"/>
</dbReference>
<dbReference type="PANTHER" id="PTHR35604">
    <property type="entry name" value="TRANSPOSASE INSH FOR INSERTION SEQUENCE ELEMENT IS5A-RELATED"/>
    <property type="match status" value="1"/>
</dbReference>
<dbReference type="PANTHER" id="PTHR35604:SF2">
    <property type="entry name" value="TRANSPOSASE INSH FOR INSERTION SEQUENCE ELEMENT IS5A-RELATED"/>
    <property type="match status" value="1"/>
</dbReference>
<dbReference type="Pfam" id="PF01609">
    <property type="entry name" value="DDE_Tnp_1"/>
    <property type="match status" value="1"/>
</dbReference>
<dbReference type="Pfam" id="PF05598">
    <property type="entry name" value="DUF772"/>
    <property type="match status" value="1"/>
</dbReference>
<keyword id="KW-0233">DNA recombination</keyword>
<keyword id="KW-0238">DNA-binding</keyword>
<keyword id="KW-1185">Reference proteome</keyword>
<keyword id="KW-0814">Transposable element</keyword>
<keyword id="KW-0815">Transposition</keyword>
<protein>
    <recommendedName>
        <fullName>Transposase InsH for insertion sequence element IS5F</fullName>
    </recommendedName>
</protein>